<evidence type="ECO:0000255" key="1">
    <source>
        <dbReference type="HAMAP-Rule" id="MF_00109"/>
    </source>
</evidence>
<reference key="1">
    <citation type="journal article" date="2008" name="Science">
        <title>Genome of an endosymbiont coupling N2 fixation to cellulolysis within RT protist cells in termite gut.</title>
        <authorList>
            <person name="Hongoh Y."/>
            <person name="Sharma V.K."/>
            <person name="Prakash T."/>
            <person name="Noda S."/>
            <person name="Toh H."/>
            <person name="Taylor T.D."/>
            <person name="Kudo T."/>
            <person name="Sakaki Y."/>
            <person name="Toyoda A."/>
            <person name="Hattori M."/>
            <person name="Ohkuma M."/>
        </authorList>
    </citation>
    <scope>NUCLEOTIDE SEQUENCE [LARGE SCALE GENOMIC DNA]</scope>
</reference>
<name>AROK_AZOPC</name>
<protein>
    <recommendedName>
        <fullName evidence="1">Shikimate kinase</fullName>
        <shortName evidence="1">SK</shortName>
        <ecNumber evidence="1">2.7.1.71</ecNumber>
    </recommendedName>
</protein>
<dbReference type="EC" id="2.7.1.71" evidence="1"/>
<dbReference type="EMBL" id="AP010656">
    <property type="protein sequence ID" value="BAG83462.1"/>
    <property type="molecule type" value="Genomic_DNA"/>
</dbReference>
<dbReference type="RefSeq" id="WP_012573223.1">
    <property type="nucleotide sequence ID" value="NC_011565.1"/>
</dbReference>
<dbReference type="SMR" id="B6YQJ0"/>
<dbReference type="STRING" id="511995.CFPG_199"/>
<dbReference type="KEGG" id="aps:CFPG_199"/>
<dbReference type="eggNOG" id="COG0703">
    <property type="taxonomic scope" value="Bacteria"/>
</dbReference>
<dbReference type="HOGENOM" id="CLU_057607_4_0_10"/>
<dbReference type="OrthoDB" id="9800332at2"/>
<dbReference type="UniPathway" id="UPA00053">
    <property type="reaction ID" value="UER00088"/>
</dbReference>
<dbReference type="Proteomes" id="UP000000723">
    <property type="component" value="Chromosome"/>
</dbReference>
<dbReference type="GO" id="GO:0005829">
    <property type="term" value="C:cytosol"/>
    <property type="evidence" value="ECO:0007669"/>
    <property type="project" value="TreeGrafter"/>
</dbReference>
<dbReference type="GO" id="GO:0005524">
    <property type="term" value="F:ATP binding"/>
    <property type="evidence" value="ECO:0007669"/>
    <property type="project" value="UniProtKB-UniRule"/>
</dbReference>
<dbReference type="GO" id="GO:0000287">
    <property type="term" value="F:magnesium ion binding"/>
    <property type="evidence" value="ECO:0007669"/>
    <property type="project" value="UniProtKB-UniRule"/>
</dbReference>
<dbReference type="GO" id="GO:0004765">
    <property type="term" value="F:shikimate kinase activity"/>
    <property type="evidence" value="ECO:0007669"/>
    <property type="project" value="UniProtKB-UniRule"/>
</dbReference>
<dbReference type="GO" id="GO:0008652">
    <property type="term" value="P:amino acid biosynthetic process"/>
    <property type="evidence" value="ECO:0007669"/>
    <property type="project" value="UniProtKB-KW"/>
</dbReference>
<dbReference type="GO" id="GO:0009073">
    <property type="term" value="P:aromatic amino acid family biosynthetic process"/>
    <property type="evidence" value="ECO:0007669"/>
    <property type="project" value="UniProtKB-KW"/>
</dbReference>
<dbReference type="GO" id="GO:0009423">
    <property type="term" value="P:chorismate biosynthetic process"/>
    <property type="evidence" value="ECO:0007669"/>
    <property type="project" value="UniProtKB-UniRule"/>
</dbReference>
<dbReference type="CDD" id="cd00464">
    <property type="entry name" value="SK"/>
    <property type="match status" value="1"/>
</dbReference>
<dbReference type="Gene3D" id="3.40.50.300">
    <property type="entry name" value="P-loop containing nucleotide triphosphate hydrolases"/>
    <property type="match status" value="1"/>
</dbReference>
<dbReference type="HAMAP" id="MF_00109">
    <property type="entry name" value="Shikimate_kinase"/>
    <property type="match status" value="1"/>
</dbReference>
<dbReference type="InterPro" id="IPR027417">
    <property type="entry name" value="P-loop_NTPase"/>
</dbReference>
<dbReference type="InterPro" id="IPR031322">
    <property type="entry name" value="Shikimate/glucono_kinase"/>
</dbReference>
<dbReference type="InterPro" id="IPR000623">
    <property type="entry name" value="Shikimate_kinase/TSH1"/>
</dbReference>
<dbReference type="NCBIfam" id="NF010555">
    <property type="entry name" value="PRK13949.1"/>
    <property type="match status" value="1"/>
</dbReference>
<dbReference type="PANTHER" id="PTHR21087">
    <property type="entry name" value="SHIKIMATE KINASE"/>
    <property type="match status" value="1"/>
</dbReference>
<dbReference type="PANTHER" id="PTHR21087:SF16">
    <property type="entry name" value="SHIKIMATE KINASE 1, CHLOROPLASTIC"/>
    <property type="match status" value="1"/>
</dbReference>
<dbReference type="Pfam" id="PF01202">
    <property type="entry name" value="SKI"/>
    <property type="match status" value="1"/>
</dbReference>
<dbReference type="PRINTS" id="PR01100">
    <property type="entry name" value="SHIKIMTKNASE"/>
</dbReference>
<dbReference type="SUPFAM" id="SSF52540">
    <property type="entry name" value="P-loop containing nucleoside triphosphate hydrolases"/>
    <property type="match status" value="1"/>
</dbReference>
<accession>B6YQJ0</accession>
<keyword id="KW-0028">Amino-acid biosynthesis</keyword>
<keyword id="KW-0057">Aromatic amino acid biosynthesis</keyword>
<keyword id="KW-0067">ATP-binding</keyword>
<keyword id="KW-0963">Cytoplasm</keyword>
<keyword id="KW-0418">Kinase</keyword>
<keyword id="KW-0460">Magnesium</keyword>
<keyword id="KW-0479">Metal-binding</keyword>
<keyword id="KW-0547">Nucleotide-binding</keyword>
<keyword id="KW-1185">Reference proteome</keyword>
<keyword id="KW-0808">Transferase</keyword>
<proteinExistence type="inferred from homology"/>
<organism>
    <name type="scientific">Azobacteroides pseudotrichonymphae genomovar. CFP2</name>
    <dbReference type="NCBI Taxonomy" id="511995"/>
    <lineage>
        <taxon>Bacteria</taxon>
        <taxon>Pseudomonadati</taxon>
        <taxon>Bacteroidota</taxon>
        <taxon>Bacteroidia</taxon>
        <taxon>Bacteroidales</taxon>
        <taxon>Candidatus Azobacteroides</taxon>
    </lineage>
</organism>
<gene>
    <name evidence="1" type="primary">aroK</name>
    <name type="ordered locus">CFPG_199</name>
</gene>
<comment type="function">
    <text evidence="1">Catalyzes the specific phosphorylation of the 3-hydroxyl group of shikimic acid using ATP as a cosubstrate.</text>
</comment>
<comment type="catalytic activity">
    <reaction evidence="1">
        <text>shikimate + ATP = 3-phosphoshikimate + ADP + H(+)</text>
        <dbReference type="Rhea" id="RHEA:13121"/>
        <dbReference type="ChEBI" id="CHEBI:15378"/>
        <dbReference type="ChEBI" id="CHEBI:30616"/>
        <dbReference type="ChEBI" id="CHEBI:36208"/>
        <dbReference type="ChEBI" id="CHEBI:145989"/>
        <dbReference type="ChEBI" id="CHEBI:456216"/>
        <dbReference type="EC" id="2.7.1.71"/>
    </reaction>
</comment>
<comment type="cofactor">
    <cofactor evidence="1">
        <name>Mg(2+)</name>
        <dbReference type="ChEBI" id="CHEBI:18420"/>
    </cofactor>
    <text evidence="1">Binds 1 Mg(2+) ion per subunit.</text>
</comment>
<comment type="pathway">
    <text evidence="1">Metabolic intermediate biosynthesis; chorismate biosynthesis; chorismate from D-erythrose 4-phosphate and phosphoenolpyruvate: step 5/7.</text>
</comment>
<comment type="subunit">
    <text evidence="1">Monomer.</text>
</comment>
<comment type="subcellular location">
    <subcellularLocation>
        <location evidence="1">Cytoplasm</location>
    </subcellularLocation>
</comment>
<comment type="similarity">
    <text evidence="1">Belongs to the shikimate kinase family.</text>
</comment>
<feature type="chain" id="PRO_1000094372" description="Shikimate kinase">
    <location>
        <begin position="1"/>
        <end position="170"/>
    </location>
</feature>
<feature type="binding site" evidence="1">
    <location>
        <begin position="11"/>
        <end position="16"/>
    </location>
    <ligand>
        <name>ATP</name>
        <dbReference type="ChEBI" id="CHEBI:30616"/>
    </ligand>
</feature>
<feature type="binding site" evidence="1">
    <location>
        <position position="15"/>
    </location>
    <ligand>
        <name>Mg(2+)</name>
        <dbReference type="ChEBI" id="CHEBI:18420"/>
    </ligand>
</feature>
<feature type="binding site" evidence="1">
    <location>
        <position position="33"/>
    </location>
    <ligand>
        <name>substrate</name>
    </ligand>
</feature>
<feature type="binding site" evidence="1">
    <location>
        <position position="57"/>
    </location>
    <ligand>
        <name>substrate</name>
    </ligand>
</feature>
<feature type="binding site" evidence="1">
    <location>
        <position position="80"/>
    </location>
    <ligand>
        <name>substrate</name>
    </ligand>
</feature>
<feature type="binding site" evidence="1">
    <location>
        <position position="119"/>
    </location>
    <ligand>
        <name>ATP</name>
        <dbReference type="ChEBI" id="CHEBI:30616"/>
    </ligand>
</feature>
<feature type="binding site" evidence="1">
    <location>
        <position position="141"/>
    </location>
    <ligand>
        <name>substrate</name>
    </ligand>
</feature>
<sequence length="170" mass="19815">MRRIFLIGYMGAGKTTIGKILAEKLNLSFIDTDFFIKNRYKKEITDIFAGEGEEKFRRIEQKILQEIIQKWENIVISTGGGTPCFFHNMELMNASGTTVYLKATIELLTERLINMKCARPLIKDKSPEEIKYFVINNLVKRELFYNQASIVFFIKKMTMNDIIENLMPKI</sequence>